<gene>
    <name evidence="1" type="primary">prmA</name>
    <name type="ordered locus">SeD_A3743</name>
</gene>
<keyword id="KW-0963">Cytoplasm</keyword>
<keyword id="KW-0489">Methyltransferase</keyword>
<keyword id="KW-0949">S-adenosyl-L-methionine</keyword>
<keyword id="KW-0808">Transferase</keyword>
<name>PRMA_SALDC</name>
<feature type="chain" id="PRO_1000132819" description="Ribosomal protein L11 methyltransferase">
    <location>
        <begin position="1"/>
        <end position="293"/>
    </location>
</feature>
<feature type="binding site" evidence="1">
    <location>
        <position position="145"/>
    </location>
    <ligand>
        <name>S-adenosyl-L-methionine</name>
        <dbReference type="ChEBI" id="CHEBI:59789"/>
    </ligand>
</feature>
<feature type="binding site" evidence="1">
    <location>
        <position position="166"/>
    </location>
    <ligand>
        <name>S-adenosyl-L-methionine</name>
        <dbReference type="ChEBI" id="CHEBI:59789"/>
    </ligand>
</feature>
<feature type="binding site" evidence="1">
    <location>
        <position position="188"/>
    </location>
    <ligand>
        <name>S-adenosyl-L-methionine</name>
        <dbReference type="ChEBI" id="CHEBI:59789"/>
    </ligand>
</feature>
<feature type="binding site" evidence="1">
    <location>
        <position position="230"/>
    </location>
    <ligand>
        <name>S-adenosyl-L-methionine</name>
        <dbReference type="ChEBI" id="CHEBI:59789"/>
    </ligand>
</feature>
<protein>
    <recommendedName>
        <fullName evidence="1">Ribosomal protein L11 methyltransferase</fullName>
        <shortName evidence="1">L11 Mtase</shortName>
        <ecNumber evidence="1">2.1.1.-</ecNumber>
    </recommendedName>
</protein>
<proteinExistence type="inferred from homology"/>
<comment type="function">
    <text evidence="1">Methylates ribosomal protein L11.</text>
</comment>
<comment type="catalytic activity">
    <reaction evidence="1">
        <text>L-lysyl-[protein] + 3 S-adenosyl-L-methionine = N(6),N(6),N(6)-trimethyl-L-lysyl-[protein] + 3 S-adenosyl-L-homocysteine + 3 H(+)</text>
        <dbReference type="Rhea" id="RHEA:54192"/>
        <dbReference type="Rhea" id="RHEA-COMP:9752"/>
        <dbReference type="Rhea" id="RHEA-COMP:13826"/>
        <dbReference type="ChEBI" id="CHEBI:15378"/>
        <dbReference type="ChEBI" id="CHEBI:29969"/>
        <dbReference type="ChEBI" id="CHEBI:57856"/>
        <dbReference type="ChEBI" id="CHEBI:59789"/>
        <dbReference type="ChEBI" id="CHEBI:61961"/>
    </reaction>
</comment>
<comment type="subcellular location">
    <subcellularLocation>
        <location evidence="1">Cytoplasm</location>
    </subcellularLocation>
</comment>
<comment type="similarity">
    <text evidence="1">Belongs to the methyltransferase superfamily. PrmA family.</text>
</comment>
<organism>
    <name type="scientific">Salmonella dublin (strain CT_02021853)</name>
    <dbReference type="NCBI Taxonomy" id="439851"/>
    <lineage>
        <taxon>Bacteria</taxon>
        <taxon>Pseudomonadati</taxon>
        <taxon>Pseudomonadota</taxon>
        <taxon>Gammaproteobacteria</taxon>
        <taxon>Enterobacterales</taxon>
        <taxon>Enterobacteriaceae</taxon>
        <taxon>Salmonella</taxon>
    </lineage>
</organism>
<evidence type="ECO:0000255" key="1">
    <source>
        <dbReference type="HAMAP-Rule" id="MF_00735"/>
    </source>
</evidence>
<dbReference type="EC" id="2.1.1.-" evidence="1"/>
<dbReference type="EMBL" id="CP001144">
    <property type="protein sequence ID" value="ACH77813.1"/>
    <property type="molecule type" value="Genomic_DNA"/>
</dbReference>
<dbReference type="RefSeq" id="WP_001145857.1">
    <property type="nucleotide sequence ID" value="NC_011205.1"/>
</dbReference>
<dbReference type="SMR" id="B5FIW1"/>
<dbReference type="KEGG" id="sed:SeD_A3743"/>
<dbReference type="HOGENOM" id="CLU_049382_4_1_6"/>
<dbReference type="Proteomes" id="UP000008322">
    <property type="component" value="Chromosome"/>
</dbReference>
<dbReference type="GO" id="GO:0005829">
    <property type="term" value="C:cytosol"/>
    <property type="evidence" value="ECO:0007669"/>
    <property type="project" value="TreeGrafter"/>
</dbReference>
<dbReference type="GO" id="GO:0016279">
    <property type="term" value="F:protein-lysine N-methyltransferase activity"/>
    <property type="evidence" value="ECO:0007669"/>
    <property type="project" value="TreeGrafter"/>
</dbReference>
<dbReference type="GO" id="GO:0032259">
    <property type="term" value="P:methylation"/>
    <property type="evidence" value="ECO:0007669"/>
    <property type="project" value="UniProtKB-KW"/>
</dbReference>
<dbReference type="CDD" id="cd02440">
    <property type="entry name" value="AdoMet_MTases"/>
    <property type="match status" value="1"/>
</dbReference>
<dbReference type="FunFam" id="3.40.50.150:FF:000021">
    <property type="entry name" value="Ribosomal protein L11 methyltransferase"/>
    <property type="match status" value="1"/>
</dbReference>
<dbReference type="Gene3D" id="3.40.50.150">
    <property type="entry name" value="Vaccinia Virus protein VP39"/>
    <property type="match status" value="1"/>
</dbReference>
<dbReference type="HAMAP" id="MF_00735">
    <property type="entry name" value="Methyltr_PrmA"/>
    <property type="match status" value="1"/>
</dbReference>
<dbReference type="InterPro" id="IPR050078">
    <property type="entry name" value="Ribosomal_L11_MeTrfase_PrmA"/>
</dbReference>
<dbReference type="InterPro" id="IPR004498">
    <property type="entry name" value="Ribosomal_PrmA_MeTrfase"/>
</dbReference>
<dbReference type="InterPro" id="IPR029063">
    <property type="entry name" value="SAM-dependent_MTases_sf"/>
</dbReference>
<dbReference type="NCBIfam" id="TIGR00406">
    <property type="entry name" value="prmA"/>
    <property type="match status" value="1"/>
</dbReference>
<dbReference type="PANTHER" id="PTHR43648">
    <property type="entry name" value="ELECTRON TRANSFER FLAVOPROTEIN BETA SUBUNIT LYSINE METHYLTRANSFERASE"/>
    <property type="match status" value="1"/>
</dbReference>
<dbReference type="PANTHER" id="PTHR43648:SF1">
    <property type="entry name" value="ELECTRON TRANSFER FLAVOPROTEIN BETA SUBUNIT LYSINE METHYLTRANSFERASE"/>
    <property type="match status" value="1"/>
</dbReference>
<dbReference type="Pfam" id="PF06325">
    <property type="entry name" value="PrmA"/>
    <property type="match status" value="1"/>
</dbReference>
<dbReference type="PIRSF" id="PIRSF000401">
    <property type="entry name" value="RPL11_MTase"/>
    <property type="match status" value="1"/>
</dbReference>
<dbReference type="SUPFAM" id="SSF53335">
    <property type="entry name" value="S-adenosyl-L-methionine-dependent methyltransferases"/>
    <property type="match status" value="1"/>
</dbReference>
<sequence length="293" mass="31955">MPWIQLKLNTTGANAEELSDALMEAGAVSITFQDTHNTPVFEPLPGETRLWGDTDVIGLFDAETDMKDVVAILEQHPLLGAGFAHKIEQLEDKDWEREWMDNFHPMRFGERLWICPSWRDIPDENAVNVMLDPGLAFGTGTHPTTSLCLQWLDGLDLNGKTVIDFGCGSGILAIAALKLGAAKAIGIDIDPQAIQASRDNAERNGVSDRLELYLPKDQPEAMKADVVVANILAGPLRELAPLISVLPVEGGLLGLSGVLASQAESVCDAYAELFTLDPVVEKEEWCRITGRKK</sequence>
<accession>B5FIW1</accession>
<reference key="1">
    <citation type="journal article" date="2011" name="J. Bacteriol.">
        <title>Comparative genomics of 28 Salmonella enterica isolates: evidence for CRISPR-mediated adaptive sublineage evolution.</title>
        <authorList>
            <person name="Fricke W.F."/>
            <person name="Mammel M.K."/>
            <person name="McDermott P.F."/>
            <person name="Tartera C."/>
            <person name="White D.G."/>
            <person name="Leclerc J.E."/>
            <person name="Ravel J."/>
            <person name="Cebula T.A."/>
        </authorList>
    </citation>
    <scope>NUCLEOTIDE SEQUENCE [LARGE SCALE GENOMIC DNA]</scope>
    <source>
        <strain>CT_02021853</strain>
    </source>
</reference>